<comment type="function">
    <text evidence="1 2">CRISPR (clustered regularly interspaced short palindromic repeat), is an adaptive immune system that provides protection against mobile genetic elements (viruses, transposable elements and conjugative plasmids). CRISPR clusters contain sequences complementary to antecedent mobile elements and target invading nucleic acids. CRISPR clusters are transcribed and processed into CRISPR RNA (crRNA). Involved in the integration of spacer DNA into the CRISPR cassette (By similarity). Functions as a dsDNA endonuclease and as a weak ssRNase (PubMed:22942283).</text>
</comment>
<comment type="cofactor">
    <cofactor evidence="2">
        <name>Mn(2+)</name>
        <dbReference type="ChEBI" id="CHEBI:29035"/>
    </cofactor>
    <cofactor evidence="1 2">
        <name>Mg(2+)</name>
        <dbReference type="ChEBI" id="CHEBI:18420"/>
    </cofactor>
    <text evidence="2">Divalent cations; Mn(2+) is slightly preferred over Mg(2+).</text>
</comment>
<comment type="activity regulation">
    <text evidence="2">Inhibited by EDTA and at pH 6.0.</text>
</comment>
<comment type="subunit">
    <text evidence="1">Homodimer, forms a heterotetramer with a Cas1 homodimer.</text>
</comment>
<comment type="similarity">
    <text evidence="1">Belongs to the CRISPR-associated endoribonuclease Cas2 protein family.</text>
</comment>
<protein>
    <recommendedName>
        <fullName>CRISPR-associated endonuclease Cas2 2</fullName>
        <ecNumber>3.1.-.-</ecNumber>
    </recommendedName>
</protein>
<reference key="1">
    <citation type="journal article" date="2004" name="Nat. Biotechnol.">
        <title>The genome sequence of the extreme thermophile Thermus thermophilus.</title>
        <authorList>
            <person name="Henne A."/>
            <person name="Brueggemann H."/>
            <person name="Raasch C."/>
            <person name="Wiezer A."/>
            <person name="Hartsch T."/>
            <person name="Liesegang H."/>
            <person name="Johann A."/>
            <person name="Lienard T."/>
            <person name="Gohl O."/>
            <person name="Martinez-Arias R."/>
            <person name="Jacobi C."/>
            <person name="Starkuviene V."/>
            <person name="Schlenczeck S."/>
            <person name="Dencker S."/>
            <person name="Huber R."/>
            <person name="Klenk H.-P."/>
            <person name="Kramer W."/>
            <person name="Merkl R."/>
            <person name="Gottschalk G."/>
            <person name="Fritz H.-J."/>
        </authorList>
    </citation>
    <scope>NUCLEOTIDE SEQUENCE [LARGE SCALE GENOMIC DNA]</scope>
    <source>
        <strain>ATCC BAA-163 / DSM 7039 / HB27</strain>
    </source>
</reference>
<reference key="2">
    <citation type="journal article" date="2012" name="J. Biol. Chem.">
        <title>Double-stranded endonuclease activity in Bacillus halodurans clustered regularly interspaced short palindromic repeats (CRISPR)-associated Cas2 protein.</title>
        <authorList>
            <person name="Nam K.H."/>
            <person name="Ding F."/>
            <person name="Haitjema C."/>
            <person name="Huang Q."/>
            <person name="DeLisa M.P."/>
            <person name="Ke A."/>
        </authorList>
    </citation>
    <scope>FUNCTION AS AN ENDONUCLEASE</scope>
    <scope>COFACTOR</scope>
    <scope>ACTIVITY REGULATION</scope>
    <source>
        <strain>ATCC BAA-163 / DSM 7039 / HB27</strain>
    </source>
</reference>
<reference key="3">
    <citation type="submission" date="2005-05" db="PDB data bank">
        <title>Crystal structure of a hypothetical protein TT1823 from Thermus thermophilus.</title>
        <authorList>
            <person name="Ihsanawati X."/>
            <person name="Murayama K."/>
            <person name="Shirouzu M."/>
            <person name="Yokoyama S."/>
        </authorList>
    </citation>
    <scope>X-RAY CRYSTALLOGRAPHY (1.64 ANGSTROMS)</scope>
</reference>
<organism>
    <name type="scientific">Thermus thermophilus (strain ATCC BAA-163 / DSM 7039 / HB27)</name>
    <dbReference type="NCBI Taxonomy" id="262724"/>
    <lineage>
        <taxon>Bacteria</taxon>
        <taxon>Thermotogati</taxon>
        <taxon>Deinococcota</taxon>
        <taxon>Deinococci</taxon>
        <taxon>Thermales</taxon>
        <taxon>Thermaceae</taxon>
        <taxon>Thermus</taxon>
    </lineage>
</organism>
<evidence type="ECO:0000255" key="1">
    <source>
        <dbReference type="HAMAP-Rule" id="MF_01471"/>
    </source>
</evidence>
<evidence type="ECO:0000269" key="2">
    <source>
    </source>
</evidence>
<evidence type="ECO:0007829" key="3">
    <source>
        <dbReference type="PDB" id="1ZPW"/>
    </source>
</evidence>
<feature type="chain" id="PRO_0000418431" description="CRISPR-associated endonuclease Cas2 2">
    <location>
        <begin position="1"/>
        <end position="90"/>
    </location>
</feature>
<feature type="binding site" evidence="1">
    <location>
        <position position="11"/>
    </location>
    <ligand>
        <name>Mg(2+)</name>
        <dbReference type="ChEBI" id="CHEBI:18420"/>
        <note>catalytic</note>
    </ligand>
</feature>
<feature type="strand" evidence="3">
    <location>
        <begin position="4"/>
        <end position="11"/>
    </location>
</feature>
<feature type="helix" evidence="3">
    <location>
        <begin position="15"/>
        <end position="26"/>
    </location>
</feature>
<feature type="strand" evidence="3">
    <location>
        <begin position="29"/>
        <end position="33"/>
    </location>
</feature>
<feature type="strand" evidence="3">
    <location>
        <begin position="36"/>
        <end position="41"/>
    </location>
</feature>
<feature type="helix" evidence="3">
    <location>
        <begin position="43"/>
        <end position="56"/>
    </location>
</feature>
<feature type="turn" evidence="3">
    <location>
        <begin position="59"/>
        <end position="61"/>
    </location>
</feature>
<feature type="strand" evidence="3">
    <location>
        <begin position="63"/>
        <end position="68"/>
    </location>
</feature>
<feature type="strand" evidence="3">
    <location>
        <begin position="77"/>
        <end position="79"/>
    </location>
</feature>
<sequence length="90" mass="10384">MGKRLYAVAYDIPDDTRRVKLANLLKSYGERVQLSVFECYLDERLLEDLRRRARRLLDLGQDALRIYPVAGQVEVLGVGPLPELREVQVL</sequence>
<gene>
    <name type="primary">cas2b</name>
    <name type="ordered locus">TT_P0101</name>
</gene>
<dbReference type="EC" id="3.1.-.-"/>
<dbReference type="EMBL" id="AE017222">
    <property type="protein sequence ID" value="AAS82431.1"/>
    <property type="molecule type" value="Genomic_DNA"/>
</dbReference>
<dbReference type="RefSeq" id="WP_011174463.1">
    <property type="nucleotide sequence ID" value="NC_005838.1"/>
</dbReference>
<dbReference type="PDB" id="1ZPW">
    <property type="method" value="X-ray"/>
    <property type="resolution" value="1.64 A"/>
    <property type="chains" value="X=1-90"/>
</dbReference>
<dbReference type="PDBsum" id="1ZPW"/>
<dbReference type="SMR" id="Q746F4"/>
<dbReference type="GeneID" id="44146538"/>
<dbReference type="KEGG" id="tth:TT_P0101"/>
<dbReference type="eggNOG" id="COG1343">
    <property type="taxonomic scope" value="Bacteria"/>
</dbReference>
<dbReference type="HOGENOM" id="CLU_161124_3_0_0"/>
<dbReference type="OrthoDB" id="9798176at2"/>
<dbReference type="EvolutionaryTrace" id="Q746F4"/>
<dbReference type="Proteomes" id="UP000000592">
    <property type="component" value="Plasmid pTT27"/>
</dbReference>
<dbReference type="GO" id="GO:0046872">
    <property type="term" value="F:metal ion binding"/>
    <property type="evidence" value="ECO:0007669"/>
    <property type="project" value="UniProtKB-UniRule"/>
</dbReference>
<dbReference type="GO" id="GO:0004521">
    <property type="term" value="F:RNA endonuclease activity"/>
    <property type="evidence" value="ECO:0007669"/>
    <property type="project" value="InterPro"/>
</dbReference>
<dbReference type="GO" id="GO:0051607">
    <property type="term" value="P:defense response to virus"/>
    <property type="evidence" value="ECO:0007669"/>
    <property type="project" value="UniProtKB-UniRule"/>
</dbReference>
<dbReference type="GO" id="GO:0043571">
    <property type="term" value="P:maintenance of CRISPR repeat elements"/>
    <property type="evidence" value="ECO:0007669"/>
    <property type="project" value="UniProtKB-UniRule"/>
</dbReference>
<dbReference type="CDD" id="cd09725">
    <property type="entry name" value="Cas2_I_II_III"/>
    <property type="match status" value="1"/>
</dbReference>
<dbReference type="Gene3D" id="3.30.70.240">
    <property type="match status" value="1"/>
</dbReference>
<dbReference type="HAMAP" id="MF_01471">
    <property type="entry name" value="Cas2"/>
    <property type="match status" value="1"/>
</dbReference>
<dbReference type="InterPro" id="IPR021127">
    <property type="entry name" value="CRISPR_associated_Cas2"/>
</dbReference>
<dbReference type="InterPro" id="IPR019199">
    <property type="entry name" value="Virulence_VapD/CRISPR_Cas2"/>
</dbReference>
<dbReference type="NCBIfam" id="TIGR01573">
    <property type="entry name" value="cas2"/>
    <property type="match status" value="1"/>
</dbReference>
<dbReference type="PANTHER" id="PTHR34405">
    <property type="entry name" value="CRISPR-ASSOCIATED ENDORIBONUCLEASE CAS2"/>
    <property type="match status" value="1"/>
</dbReference>
<dbReference type="PANTHER" id="PTHR34405:SF3">
    <property type="entry name" value="CRISPR-ASSOCIATED ENDORIBONUCLEASE CAS2 3"/>
    <property type="match status" value="1"/>
</dbReference>
<dbReference type="Pfam" id="PF09827">
    <property type="entry name" value="CRISPR_Cas2"/>
    <property type="match status" value="1"/>
</dbReference>
<dbReference type="SUPFAM" id="SSF143430">
    <property type="entry name" value="TTP0101/SSO1404-like"/>
    <property type="match status" value="1"/>
</dbReference>
<name>CAS2B_THET2</name>
<proteinExistence type="evidence at protein level"/>
<keyword id="KW-0002">3D-structure</keyword>
<keyword id="KW-0051">Antiviral defense</keyword>
<keyword id="KW-0255">Endonuclease</keyword>
<keyword id="KW-0378">Hydrolase</keyword>
<keyword id="KW-0460">Magnesium</keyword>
<keyword id="KW-0479">Metal-binding</keyword>
<keyword id="KW-0540">Nuclease</keyword>
<keyword id="KW-0614">Plasmid</keyword>
<accession>Q746F4</accession>
<geneLocation type="plasmid">
    <name>pTT27</name>
</geneLocation>